<name>HIS3_CLAM3</name>
<sequence length="132" mass="14405">MSAPAPVPDVDGVLARASFADDGLLPAVIQQHDTREVLMLGYMDREALRRTLTTGRVTFWSRSRREYWRKGDTSGHGQYVRDAALDCDGDTVLIQVDQVGVACHTGTRTCFDADHLHPVTGARPAADEGPTP</sequence>
<accession>A5CRW1</accession>
<protein>
    <recommendedName>
        <fullName evidence="1">Phosphoribosyl-AMP cyclohydrolase</fullName>
        <shortName evidence="1">PRA-CH</shortName>
        <ecNumber evidence="1">3.5.4.19</ecNumber>
    </recommendedName>
</protein>
<feature type="chain" id="PRO_0000319686" description="Phosphoribosyl-AMP cyclohydrolase">
    <location>
        <begin position="1"/>
        <end position="132"/>
    </location>
</feature>
<feature type="binding site" evidence="1">
    <location>
        <position position="86"/>
    </location>
    <ligand>
        <name>Mg(2+)</name>
        <dbReference type="ChEBI" id="CHEBI:18420"/>
    </ligand>
</feature>
<feature type="binding site" evidence="1">
    <location>
        <position position="87"/>
    </location>
    <ligand>
        <name>Zn(2+)</name>
        <dbReference type="ChEBI" id="CHEBI:29105"/>
        <note>ligand shared between dimeric partners</note>
    </ligand>
</feature>
<feature type="binding site" evidence="1">
    <location>
        <position position="88"/>
    </location>
    <ligand>
        <name>Mg(2+)</name>
        <dbReference type="ChEBI" id="CHEBI:18420"/>
    </ligand>
</feature>
<feature type="binding site" evidence="1">
    <location>
        <position position="90"/>
    </location>
    <ligand>
        <name>Mg(2+)</name>
        <dbReference type="ChEBI" id="CHEBI:18420"/>
    </ligand>
</feature>
<feature type="binding site" evidence="1">
    <location>
        <position position="103"/>
    </location>
    <ligand>
        <name>Zn(2+)</name>
        <dbReference type="ChEBI" id="CHEBI:29105"/>
        <note>ligand shared between dimeric partners</note>
    </ligand>
</feature>
<feature type="binding site" evidence="1">
    <location>
        <position position="110"/>
    </location>
    <ligand>
        <name>Zn(2+)</name>
        <dbReference type="ChEBI" id="CHEBI:29105"/>
        <note>ligand shared between dimeric partners</note>
    </ligand>
</feature>
<reference key="1">
    <citation type="journal article" date="2008" name="J. Bacteriol.">
        <title>The genome sequence of the tomato-pathogenic actinomycete Clavibacter michiganensis subsp. michiganensis NCPPB382 reveals a large island involved in pathogenicity.</title>
        <authorList>
            <person name="Gartemann K.-H."/>
            <person name="Abt B."/>
            <person name="Bekel T."/>
            <person name="Burger A."/>
            <person name="Engemann J."/>
            <person name="Fluegel M."/>
            <person name="Gaigalat L."/>
            <person name="Goesmann A."/>
            <person name="Graefen I."/>
            <person name="Kalinowski J."/>
            <person name="Kaup O."/>
            <person name="Kirchner O."/>
            <person name="Krause L."/>
            <person name="Linke B."/>
            <person name="McHardy A."/>
            <person name="Meyer F."/>
            <person name="Pohle S."/>
            <person name="Rueckert C."/>
            <person name="Schneiker S."/>
            <person name="Zellermann E.-M."/>
            <person name="Puehler A."/>
            <person name="Eichenlaub R."/>
            <person name="Kaiser O."/>
            <person name="Bartels D."/>
        </authorList>
    </citation>
    <scope>NUCLEOTIDE SEQUENCE [LARGE SCALE GENOMIC DNA]</scope>
    <source>
        <strain>NCPPB 382</strain>
    </source>
</reference>
<dbReference type="EC" id="3.5.4.19" evidence="1"/>
<dbReference type="EMBL" id="AM711867">
    <property type="protein sequence ID" value="CAN01824.1"/>
    <property type="molecule type" value="Genomic_DNA"/>
</dbReference>
<dbReference type="RefSeq" id="WP_012038456.1">
    <property type="nucleotide sequence ID" value="NC_009480.1"/>
</dbReference>
<dbReference type="SMR" id="A5CRW1"/>
<dbReference type="GeneID" id="92947755"/>
<dbReference type="KEGG" id="cmi:CMM_1768"/>
<dbReference type="eggNOG" id="COG0139">
    <property type="taxonomic scope" value="Bacteria"/>
</dbReference>
<dbReference type="HOGENOM" id="CLU_048577_5_1_11"/>
<dbReference type="OrthoDB" id="9795769at2"/>
<dbReference type="UniPathway" id="UPA00031">
    <property type="reaction ID" value="UER00008"/>
</dbReference>
<dbReference type="Proteomes" id="UP000001564">
    <property type="component" value="Chromosome"/>
</dbReference>
<dbReference type="GO" id="GO:0005737">
    <property type="term" value="C:cytoplasm"/>
    <property type="evidence" value="ECO:0007669"/>
    <property type="project" value="UniProtKB-SubCell"/>
</dbReference>
<dbReference type="GO" id="GO:0000287">
    <property type="term" value="F:magnesium ion binding"/>
    <property type="evidence" value="ECO:0007669"/>
    <property type="project" value="UniProtKB-UniRule"/>
</dbReference>
<dbReference type="GO" id="GO:0004635">
    <property type="term" value="F:phosphoribosyl-AMP cyclohydrolase activity"/>
    <property type="evidence" value="ECO:0007669"/>
    <property type="project" value="UniProtKB-UniRule"/>
</dbReference>
<dbReference type="GO" id="GO:0008270">
    <property type="term" value="F:zinc ion binding"/>
    <property type="evidence" value="ECO:0007669"/>
    <property type="project" value="UniProtKB-UniRule"/>
</dbReference>
<dbReference type="GO" id="GO:0000105">
    <property type="term" value="P:L-histidine biosynthetic process"/>
    <property type="evidence" value="ECO:0007669"/>
    <property type="project" value="UniProtKB-UniRule"/>
</dbReference>
<dbReference type="FunFam" id="3.10.20.810:FF:000001">
    <property type="entry name" value="Histidine biosynthesis bifunctional protein HisIE"/>
    <property type="match status" value="1"/>
</dbReference>
<dbReference type="Gene3D" id="3.10.20.810">
    <property type="entry name" value="Phosphoribosyl-AMP cyclohydrolase"/>
    <property type="match status" value="1"/>
</dbReference>
<dbReference type="HAMAP" id="MF_01021">
    <property type="entry name" value="HisI"/>
    <property type="match status" value="1"/>
</dbReference>
<dbReference type="InterPro" id="IPR026660">
    <property type="entry name" value="PRA-CH"/>
</dbReference>
<dbReference type="InterPro" id="IPR002496">
    <property type="entry name" value="PRib_AMP_CycHydrolase_dom"/>
</dbReference>
<dbReference type="InterPro" id="IPR038019">
    <property type="entry name" value="PRib_AMP_CycHydrolase_sf"/>
</dbReference>
<dbReference type="NCBIfam" id="NF000768">
    <property type="entry name" value="PRK00051.1"/>
    <property type="match status" value="1"/>
</dbReference>
<dbReference type="PANTHER" id="PTHR42945">
    <property type="entry name" value="HISTIDINE BIOSYNTHESIS BIFUNCTIONAL PROTEIN"/>
    <property type="match status" value="1"/>
</dbReference>
<dbReference type="PANTHER" id="PTHR42945:SF11">
    <property type="entry name" value="PHOSPHORIBOSYL-AMP CYCLOHYDROLASE"/>
    <property type="match status" value="1"/>
</dbReference>
<dbReference type="Pfam" id="PF01502">
    <property type="entry name" value="PRA-CH"/>
    <property type="match status" value="1"/>
</dbReference>
<dbReference type="SUPFAM" id="SSF141734">
    <property type="entry name" value="HisI-like"/>
    <property type="match status" value="1"/>
</dbReference>
<proteinExistence type="inferred from homology"/>
<organism>
    <name type="scientific">Clavibacter michiganensis subsp. michiganensis (strain NCPPB 382)</name>
    <dbReference type="NCBI Taxonomy" id="443906"/>
    <lineage>
        <taxon>Bacteria</taxon>
        <taxon>Bacillati</taxon>
        <taxon>Actinomycetota</taxon>
        <taxon>Actinomycetes</taxon>
        <taxon>Micrococcales</taxon>
        <taxon>Microbacteriaceae</taxon>
        <taxon>Clavibacter</taxon>
    </lineage>
</organism>
<gene>
    <name evidence="1" type="primary">hisI</name>
    <name type="ordered locus">CMM_1768</name>
</gene>
<evidence type="ECO:0000255" key="1">
    <source>
        <dbReference type="HAMAP-Rule" id="MF_01021"/>
    </source>
</evidence>
<comment type="function">
    <text evidence="1">Catalyzes the hydrolysis of the adenine ring of phosphoribosyl-AMP.</text>
</comment>
<comment type="catalytic activity">
    <reaction evidence="1">
        <text>1-(5-phospho-beta-D-ribosyl)-5'-AMP + H2O = 1-(5-phospho-beta-D-ribosyl)-5-[(5-phospho-beta-D-ribosylamino)methylideneamino]imidazole-4-carboxamide</text>
        <dbReference type="Rhea" id="RHEA:20049"/>
        <dbReference type="ChEBI" id="CHEBI:15377"/>
        <dbReference type="ChEBI" id="CHEBI:58435"/>
        <dbReference type="ChEBI" id="CHEBI:59457"/>
        <dbReference type="EC" id="3.5.4.19"/>
    </reaction>
</comment>
<comment type="cofactor">
    <cofactor evidence="1">
        <name>Mg(2+)</name>
        <dbReference type="ChEBI" id="CHEBI:18420"/>
    </cofactor>
    <text evidence="1">Binds 1 Mg(2+) ion per subunit.</text>
</comment>
<comment type="cofactor">
    <cofactor evidence="1">
        <name>Zn(2+)</name>
        <dbReference type="ChEBI" id="CHEBI:29105"/>
    </cofactor>
    <text evidence="1">Binds 1 zinc ion per subunit.</text>
</comment>
<comment type="pathway">
    <text evidence="1">Amino-acid biosynthesis; L-histidine biosynthesis; L-histidine from 5-phospho-alpha-D-ribose 1-diphosphate: step 3/9.</text>
</comment>
<comment type="subunit">
    <text evidence="1">Homodimer.</text>
</comment>
<comment type="subcellular location">
    <subcellularLocation>
        <location evidence="1">Cytoplasm</location>
    </subcellularLocation>
</comment>
<comment type="similarity">
    <text evidence="1">Belongs to the PRA-CH family.</text>
</comment>
<keyword id="KW-0028">Amino-acid biosynthesis</keyword>
<keyword id="KW-0963">Cytoplasm</keyword>
<keyword id="KW-0368">Histidine biosynthesis</keyword>
<keyword id="KW-0378">Hydrolase</keyword>
<keyword id="KW-0460">Magnesium</keyword>
<keyword id="KW-0479">Metal-binding</keyword>
<keyword id="KW-0862">Zinc</keyword>